<comment type="function">
    <text>In the hair cortex, hair keratin intermediate filaments are embedded in an interfilamentous matrix, consisting of hair keratin-associated proteins (KRTAP), which are essential for the formation of a rigid and resistant hair shaft through their extensive disulfide bond cross-linking with abundant cysteine residues of hair keratins. The matrix proteins include the high-sulfur and high-glycine-tyrosine keratins.</text>
</comment>
<comment type="subunit">
    <text>Interacts with hair keratins.</text>
</comment>
<comment type="interaction">
    <interactant intactId="EBI-10176379">
        <id>P59991</id>
    </interactant>
    <interactant intactId="EBI-12006944">
        <id>O43184-4</id>
        <label>ADAM12</label>
    </interactant>
    <organismsDiffer>false</organismsDiffer>
    <experiments>3</experiments>
</comment>
<comment type="interaction">
    <interactant intactId="EBI-10176379">
        <id>P59991</id>
    </interactant>
    <interactant intactId="EBI-948603">
        <id>Q03989</id>
        <label>ARID5A</label>
    </interactant>
    <organismsDiffer>false</organismsDiffer>
    <experiments>5</experiments>
</comment>
<comment type="interaction">
    <interactant intactId="EBI-10176379">
        <id>P59991</id>
    </interactant>
    <interactant intactId="EBI-11954292">
        <id>Q86V38</id>
        <label>ATN1</label>
    </interactant>
    <organismsDiffer>false</organismsDiffer>
    <experiments>3</experiments>
</comment>
<comment type="interaction">
    <interactant intactId="EBI-10176379">
        <id>P59991</id>
    </interactant>
    <interactant intactId="EBI-10270867">
        <id>Q8NEY4-2</id>
        <label>ATP6V1C2</label>
    </interactant>
    <organismsDiffer>false</organismsDiffer>
    <experiments>3</experiments>
</comment>
<comment type="interaction">
    <interactant intactId="EBI-10176379">
        <id>P59991</id>
    </interactant>
    <interactant intactId="EBI-8640233">
        <id>Q5T686</id>
        <label>AVPI1</label>
    </interactant>
    <organismsDiffer>false</organismsDiffer>
    <experiments>4</experiments>
</comment>
<comment type="interaction">
    <interactant intactId="EBI-10176379">
        <id>P59991</id>
    </interactant>
    <interactant intactId="EBI-10174813">
        <id>A8KA13</id>
        <label>BCL6B</label>
    </interactant>
    <organismsDiffer>false</organismsDiffer>
    <experiments>3</experiments>
</comment>
<comment type="interaction">
    <interactant intactId="EBI-10176379">
        <id>P59991</id>
    </interactant>
    <interactant intactId="EBI-745073">
        <id>Q9BXY8</id>
        <label>BEX2</label>
    </interactant>
    <organismsDiffer>false</organismsDiffer>
    <experiments>3</experiments>
</comment>
<comment type="interaction">
    <interactant intactId="EBI-10176379">
        <id>P59991</id>
    </interactant>
    <interactant intactId="EBI-744545">
        <id>Q8NEC5</id>
        <label>CATSPER1</label>
    </interactant>
    <organismsDiffer>false</organismsDiffer>
    <experiments>3</experiments>
</comment>
<comment type="interaction">
    <interactant intactId="EBI-10176379">
        <id>P59991</id>
    </interactant>
    <interactant intactId="EBI-12196065">
        <id>Q8N7E2</id>
        <label>CBLL2</label>
    </interactant>
    <organismsDiffer>false</organismsDiffer>
    <experiments>3</experiments>
</comment>
<comment type="interaction">
    <interactant intactId="EBI-10176379">
        <id>P59991</id>
    </interactant>
    <interactant intactId="EBI-11974585">
        <id>Q14781-2</id>
        <label>CBX2</label>
    </interactant>
    <organismsDiffer>false</organismsDiffer>
    <experiments>3</experiments>
</comment>
<comment type="interaction">
    <interactant intactId="EBI-10176379">
        <id>P59991</id>
    </interactant>
    <interactant intactId="EBI-2836773">
        <id>Q9UK58</id>
        <label>CCNL1</label>
    </interactant>
    <organismsDiffer>false</organismsDiffer>
    <experiments>3</experiments>
</comment>
<comment type="interaction">
    <interactant intactId="EBI-10176379">
        <id>P59991</id>
    </interactant>
    <interactant intactId="EBI-12024864">
        <id>Q96S94-5</id>
        <label>CCNL2</label>
    </interactant>
    <organismsDiffer>false</organismsDiffer>
    <experiments>3</experiments>
</comment>
<comment type="interaction">
    <interactant intactId="EBI-10176379">
        <id>P59991</id>
    </interactant>
    <interactant intactId="EBI-9038570">
        <id>P27918</id>
        <label>CFP</label>
    </interactant>
    <organismsDiffer>false</organismsDiffer>
    <experiments>3</experiments>
</comment>
<comment type="interaction">
    <interactant intactId="EBI-10176379">
        <id>P59991</id>
    </interactant>
    <interactant intactId="EBI-947551">
        <id>Q9H2X0</id>
        <label>CHRD</label>
    </interactant>
    <organismsDiffer>false</organismsDiffer>
    <experiments>3</experiments>
</comment>
<comment type="interaction">
    <interactant intactId="EBI-10176379">
        <id>P59991</id>
    </interactant>
    <interactant intactId="EBI-741032">
        <id>Q8NE01</id>
        <label>CNNM3</label>
    </interactant>
    <organismsDiffer>false</organismsDiffer>
    <experiments>3</experiments>
</comment>
<comment type="interaction">
    <interactant intactId="EBI-10176379">
        <id>P59991</id>
    </interactant>
    <interactant intactId="EBI-3867333">
        <id>A8MQ03</id>
        <label>CYSRT1</label>
    </interactant>
    <organismsDiffer>false</organismsDiffer>
    <experiments>3</experiments>
</comment>
<comment type="interaction">
    <interactant intactId="EBI-10176379">
        <id>P59991</id>
    </interactant>
    <interactant intactId="EBI-12206931">
        <id>Q14129</id>
        <label>DGCR6</label>
    </interactant>
    <organismsDiffer>false</organismsDiffer>
    <experiments>3</experiments>
</comment>
<comment type="interaction">
    <interactant intactId="EBI-10176379">
        <id>P59991</id>
    </interactant>
    <interactant intactId="EBI-746300">
        <id>Q96LJ7</id>
        <label>DHRS1</label>
    </interactant>
    <organismsDiffer>false</organismsDiffer>
    <experiments>3</experiments>
</comment>
<comment type="interaction">
    <interactant intactId="EBI-10176379">
        <id>P59991</id>
    </interactant>
    <interactant intactId="EBI-743414">
        <id>O95967</id>
        <label>EFEMP2</label>
    </interactant>
    <organismsDiffer>false</organismsDiffer>
    <experiments>3</experiments>
</comment>
<comment type="interaction">
    <interactant intactId="EBI-10176379">
        <id>P59991</id>
    </interactant>
    <interactant intactId="EBI-751864">
        <id>Q9NVF9</id>
        <label>ETNK2</label>
    </interactant>
    <organismsDiffer>false</organismsDiffer>
    <experiments>3</experiments>
</comment>
<comment type="interaction">
    <interactant intactId="EBI-10176379">
        <id>P59991</id>
    </interactant>
    <interactant intactId="EBI-2602739">
        <id>Q08E93</id>
        <label>FAM27E3</label>
    </interactant>
    <organismsDiffer>false</organismsDiffer>
    <experiments>3</experiments>
</comment>
<comment type="interaction">
    <interactant intactId="EBI-10176379">
        <id>P59991</id>
    </interactant>
    <interactant intactId="EBI-741101">
        <id>Q13643</id>
        <label>FHL3</label>
    </interactant>
    <organismsDiffer>false</organismsDiffer>
    <experiments>6</experiments>
</comment>
<comment type="interaction">
    <interactant intactId="EBI-10176379">
        <id>P59991</id>
    </interactant>
    <interactant intactId="EBI-11317801">
        <id>Q12950</id>
        <label>FOXD4</label>
    </interactant>
    <organismsDiffer>false</organismsDiffer>
    <experiments>3</experiments>
</comment>
<comment type="interaction">
    <interactant intactId="EBI-10176379">
        <id>P59991</id>
    </interactant>
    <interactant intactId="EBI-11320806">
        <id>Q9NU39</id>
        <label>FOXD4L1</label>
    </interactant>
    <organismsDiffer>false</organismsDiffer>
    <experiments>3</experiments>
</comment>
<comment type="interaction">
    <interactant intactId="EBI-10176379">
        <id>P59991</id>
    </interactant>
    <interactant intactId="EBI-11961494">
        <id>Q6VB84</id>
        <label>FOXD4L3</label>
    </interactant>
    <organismsDiffer>false</organismsDiffer>
    <experiments>3</experiments>
</comment>
<comment type="interaction">
    <interactant intactId="EBI-10176379">
        <id>P59991</id>
    </interactant>
    <interactant intactId="EBI-2116863">
        <id>Q99988</id>
        <label>GDF15</label>
    </interactant>
    <organismsDiffer>false</organismsDiffer>
    <experiments>3</experiments>
</comment>
<comment type="interaction">
    <interactant intactId="EBI-10176379">
        <id>P59991</id>
    </interactant>
    <interactant intactId="EBI-751540">
        <id>O95872</id>
        <label>GPANK1</label>
    </interactant>
    <organismsDiffer>false</organismsDiffer>
    <experiments>3</experiments>
</comment>
<comment type="interaction">
    <interactant intactId="EBI-10176379">
        <id>P59991</id>
    </interactant>
    <interactant intactId="EBI-944395">
        <id>O60565</id>
        <label>GREM1</label>
    </interactant>
    <organismsDiffer>false</organismsDiffer>
    <experiments>3</experiments>
</comment>
<comment type="interaction">
    <interactant intactId="EBI-10176379">
        <id>P59991</id>
    </interactant>
    <interactant intactId="EBI-740785">
        <id>P49639</id>
        <label>HOXA1</label>
    </interactant>
    <organismsDiffer>false</organismsDiffer>
    <experiments>3</experiments>
</comment>
<comment type="interaction">
    <interactant intactId="EBI-10176379">
        <id>P59991</id>
    </interactant>
    <interactant intactId="EBI-745290">
        <id>P17482</id>
        <label>HOXB9</label>
    </interactant>
    <organismsDiffer>false</organismsDiffer>
    <experiments>3</experiments>
</comment>
<comment type="interaction">
    <interactant intactId="EBI-10176379">
        <id>P59991</id>
    </interactant>
    <interactant intactId="EBI-947253">
        <id>Q9UBD0</id>
        <label>HSFX2</label>
    </interactant>
    <organismsDiffer>false</organismsDiffer>
    <experiments>3</experiments>
</comment>
<comment type="interaction">
    <interactant intactId="EBI-10176379">
        <id>P59991</id>
    </interactant>
    <interactant intactId="EBI-715611">
        <id>Q9C086</id>
        <label>INO80B</label>
    </interactant>
    <organismsDiffer>false</organismsDiffer>
    <experiments>3</experiments>
</comment>
<comment type="interaction">
    <interactant intactId="EBI-10176379">
        <id>P59991</id>
    </interactant>
    <interactant intactId="EBI-10220600">
        <id>Q8NA54</id>
        <label>IQUB</label>
    </interactant>
    <organismsDiffer>false</organismsDiffer>
    <experiments>3</experiments>
</comment>
<comment type="interaction">
    <interactant intactId="EBI-10176379">
        <id>P59991</id>
    </interactant>
    <interactant intactId="EBI-1047093">
        <id>O76011</id>
        <label>KRT34</label>
    </interactant>
    <organismsDiffer>false</organismsDiffer>
    <experiments>3</experiments>
</comment>
<comment type="interaction">
    <interactant intactId="EBI-10176379">
        <id>P59991</id>
    </interactant>
    <interactant intactId="EBI-10172150">
        <id>P60370</id>
        <label>KRTAP10-5</label>
    </interactant>
    <organismsDiffer>false</organismsDiffer>
    <experiments>3</experiments>
</comment>
<comment type="interaction">
    <interactant intactId="EBI-10176379">
        <id>P59991</id>
    </interactant>
    <interactant intactId="EBI-10171774">
        <id>P60410</id>
        <label>KRTAP10-8</label>
    </interactant>
    <organismsDiffer>false</organismsDiffer>
    <experiments>3</experiments>
</comment>
<comment type="interaction">
    <interactant intactId="EBI-10176379">
        <id>P59991</id>
    </interactant>
    <interactant intactId="EBI-10210845">
        <id>P59990</id>
        <label>KRTAP12-1</label>
    </interactant>
    <organismsDiffer>false</organismsDiffer>
    <experiments>4</experiments>
</comment>
<comment type="interaction">
    <interactant intactId="EBI-10176379">
        <id>P59991</id>
    </interactant>
    <interactant intactId="EBI-10176396">
        <id>P60329</id>
        <label>KRTAP12-4</label>
    </interactant>
    <organismsDiffer>false</organismsDiffer>
    <experiments>3</experiments>
</comment>
<comment type="interaction">
    <interactant intactId="EBI-10176379">
        <id>P59991</id>
    </interactant>
    <interactant intactId="EBI-11953846">
        <id>Q52LG2</id>
        <label>KRTAP13-2</label>
    </interactant>
    <organismsDiffer>false</organismsDiffer>
    <experiments>3</experiments>
</comment>
<comment type="interaction">
    <interactant intactId="EBI-10176379">
        <id>P59991</id>
    </interactant>
    <interactant intactId="EBI-11992140">
        <id>Q3LI76</id>
        <label>KRTAP15-1</label>
    </interactant>
    <organismsDiffer>false</organismsDiffer>
    <experiments>3</experiments>
</comment>
<comment type="interaction">
    <interactant intactId="EBI-10176379">
        <id>P59991</id>
    </interactant>
    <interactant intactId="EBI-12196745">
        <id>Q3LHN2</id>
        <label>KRTAP19-2</label>
    </interactant>
    <organismsDiffer>false</organismsDiffer>
    <experiments>3</experiments>
</comment>
<comment type="interaction">
    <interactant intactId="EBI-10176379">
        <id>P59991</id>
    </interactant>
    <interactant intactId="EBI-18395721">
        <id>Q3LI59</id>
        <label>KRTAP21-2</label>
    </interactant>
    <organismsDiffer>false</organismsDiffer>
    <experiments>3</experiments>
</comment>
<comment type="interaction">
    <interactant intactId="EBI-10176379">
        <id>P59991</id>
    </interactant>
    <interactant intactId="EBI-3957672">
        <id>Q6PEX3</id>
        <label>KRTAP26-1</label>
    </interactant>
    <organismsDiffer>false</organismsDiffer>
    <experiments>6</experiments>
</comment>
<comment type="interaction">
    <interactant intactId="EBI-10176379">
        <id>P59991</id>
    </interactant>
    <interactant intactId="EBI-751260">
        <id>Q9BYR7</id>
        <label>KRTAP3-2</label>
    </interactant>
    <organismsDiffer>false</organismsDiffer>
    <experiments>3</experiments>
</comment>
<comment type="interaction">
    <interactant intactId="EBI-10176379">
        <id>P59991</id>
    </interactant>
    <interactant intactId="EBI-10172511">
        <id>Q9BYR5</id>
        <label>KRTAP4-2</label>
    </interactant>
    <organismsDiffer>false</organismsDiffer>
    <experiments>3</experiments>
</comment>
<comment type="interaction">
    <interactant intactId="EBI-10176379">
        <id>P59991</id>
    </interactant>
    <interactant intactId="EBI-3958099">
        <id>P26371</id>
        <label>KRTAP5-9</label>
    </interactant>
    <organismsDiffer>false</organismsDiffer>
    <experiments>6</experiments>
</comment>
<comment type="interaction">
    <interactant intactId="EBI-10176379">
        <id>P59991</id>
    </interactant>
    <interactant intactId="EBI-11962084">
        <id>Q3LI66</id>
        <label>KRTAP6-2</label>
    </interactant>
    <organismsDiffer>false</organismsDiffer>
    <experiments>6</experiments>
</comment>
<comment type="interaction">
    <interactant intactId="EBI-10176379">
        <id>P59991</id>
    </interactant>
    <interactant intactId="EBI-22311199">
        <id>Q3LI67</id>
        <label>KRTAP6-3</label>
    </interactant>
    <organismsDiffer>false</organismsDiffer>
    <experiments>3</experiments>
</comment>
<comment type="interaction">
    <interactant intactId="EBI-10176379">
        <id>P59991</id>
    </interactant>
    <interactant intactId="EBI-1043191">
        <id>Q9BYQ3</id>
        <label>KRTAP9-3</label>
    </interactant>
    <organismsDiffer>false</organismsDiffer>
    <experiments>3</experiments>
</comment>
<comment type="interaction">
    <interactant intactId="EBI-10176379">
        <id>P59991</id>
    </interactant>
    <interactant intactId="EBI-11958364">
        <id>Q9BYQ0</id>
        <label>KRTAP9-8</label>
    </interactant>
    <organismsDiffer>false</organismsDiffer>
    <experiments>3</experiments>
</comment>
<comment type="interaction">
    <interactant intactId="EBI-10176379">
        <id>P59991</id>
    </interactant>
    <interactant intactId="EBI-11962058">
        <id>Q5T7P2</id>
        <label>LCE1A</label>
    </interactant>
    <organismsDiffer>false</organismsDiffer>
    <experiments>3</experiments>
</comment>
<comment type="interaction">
    <interactant intactId="EBI-10176379">
        <id>P59991</id>
    </interactant>
    <interactant intactId="EBI-12224199">
        <id>Q5T751</id>
        <label>LCE1C</label>
    </interactant>
    <organismsDiffer>false</organismsDiffer>
    <experiments>3</experiments>
</comment>
<comment type="interaction">
    <interactant intactId="EBI-10176379">
        <id>P59991</id>
    </interactant>
    <interactant intactId="EBI-11958008">
        <id>Q5T754</id>
        <label>LCE1F</label>
    </interactant>
    <organismsDiffer>false</organismsDiffer>
    <experiments>3</experiments>
</comment>
<comment type="interaction">
    <interactant intactId="EBI-10176379">
        <id>P59991</id>
    </interactant>
    <interactant intactId="EBI-10246607">
        <id>Q5TA79</id>
        <label>LCE2A</label>
    </interactant>
    <organismsDiffer>false</organismsDiffer>
    <experiments>3</experiments>
</comment>
<comment type="interaction">
    <interactant intactId="EBI-10176379">
        <id>P59991</id>
    </interactant>
    <interactant intactId="EBI-11478468">
        <id>O14633</id>
        <label>LCE2B</label>
    </interactant>
    <organismsDiffer>false</organismsDiffer>
    <experiments>3</experiments>
</comment>
<comment type="interaction">
    <interactant intactId="EBI-10176379">
        <id>P59991</id>
    </interactant>
    <interactant intactId="EBI-10246358">
        <id>Q5TA78</id>
        <label>LCE4A</label>
    </interactant>
    <organismsDiffer>false</organismsDiffer>
    <experiments>3</experiments>
</comment>
<comment type="interaction">
    <interactant intactId="EBI-10176379">
        <id>P59991</id>
    </interactant>
    <interactant intactId="EBI-16439278">
        <id>Q6FHY5</id>
        <label>MEOX2</label>
    </interactant>
    <organismsDiffer>false</organismsDiffer>
    <experiments>3</experiments>
</comment>
<comment type="interaction">
    <interactant intactId="EBI-10176379">
        <id>P59991</id>
    </interactant>
    <interactant intactId="EBI-744402">
        <id>Q9NP98</id>
        <label>MYOZ1</label>
    </interactant>
    <organismsDiffer>false</organismsDiffer>
    <experiments>3</experiments>
</comment>
<comment type="interaction">
    <interactant intactId="EBI-10176379">
        <id>P59991</id>
    </interactant>
    <interactant intactId="EBI-2858213">
        <id>Q86VE0</id>
        <label>MYPOP</label>
    </interactant>
    <organismsDiffer>false</organismsDiffer>
    <experiments>3</experiments>
</comment>
<comment type="interaction">
    <interactant intactId="EBI-10176379">
        <id>P59991</id>
    </interactant>
    <interactant intactId="EBI-6979889">
        <id>Q92692-2</id>
        <label>NECTIN2</label>
    </interactant>
    <organismsDiffer>false</organismsDiffer>
    <experiments>3</experiments>
</comment>
<comment type="interaction">
    <interactant intactId="EBI-10176379">
        <id>P59991</id>
    </interactant>
    <interactant intactId="EBI-945833">
        <id>Q7Z3S9</id>
        <label>NOTCH2NLA</label>
    </interactant>
    <organismsDiffer>false</organismsDiffer>
    <experiments>3</experiments>
</comment>
<comment type="interaction">
    <interactant intactId="EBI-10176379">
        <id>P59991</id>
    </interactant>
    <interactant intactId="EBI-22310682">
        <id>P0DPK4</id>
        <label>NOTCH2NLC</label>
    </interactant>
    <organismsDiffer>false</organismsDiffer>
    <experiments>3</experiments>
</comment>
<comment type="interaction">
    <interactant intactId="EBI-10176379">
        <id>P59991</id>
    </interactant>
    <interactant intactId="EBI-748927">
        <id>Q9NQX5</id>
        <label>NPDC1</label>
    </interactant>
    <organismsDiffer>false</organismsDiffer>
    <experiments>3</experiments>
</comment>
<comment type="interaction">
    <interactant intactId="EBI-10176379">
        <id>P59991</id>
    </interactant>
    <interactant intactId="EBI-10250949">
        <id>Q6NSM0</id>
        <label>NR1D2</label>
    </interactant>
    <organismsDiffer>false</organismsDiffer>
    <experiments>3</experiments>
</comment>
<comment type="interaction">
    <interactant intactId="EBI-10176379">
        <id>P59991</id>
    </interactant>
    <interactant intactId="EBI-10234557">
        <id>Q14990</id>
        <label>ODF1</label>
    </interactant>
    <organismsDiffer>false</organismsDiffer>
    <experiments>3</experiments>
</comment>
<comment type="interaction">
    <interactant intactId="EBI-10176379">
        <id>P59991</id>
    </interactant>
    <interactant intactId="EBI-740446">
        <id>P32242</id>
        <label>OTX1</label>
    </interactant>
    <organismsDiffer>false</organismsDiffer>
    <experiments>6</experiments>
</comment>
<comment type="interaction">
    <interactant intactId="EBI-10176379">
        <id>P59991</id>
    </interactant>
    <interactant intactId="EBI-77926">
        <id>Q9UKS6</id>
        <label>PACSIN3</label>
    </interactant>
    <organismsDiffer>false</organismsDiffer>
    <experiments>3</experiments>
</comment>
<comment type="interaction">
    <interactant intactId="EBI-10176379">
        <id>P59991</id>
    </interactant>
    <interactant intactId="EBI-11022007">
        <id>Q9HBE1-4</id>
        <label>PATZ1</label>
    </interactant>
    <organismsDiffer>false</organismsDiffer>
    <experiments>3</experiments>
</comment>
<comment type="interaction">
    <interactant intactId="EBI-10176379">
        <id>P59991</id>
    </interactant>
    <interactant intactId="EBI-11956269">
        <id>Q92824-2</id>
        <label>PCSK5</label>
    </interactant>
    <organismsDiffer>false</organismsDiffer>
    <experiments>3</experiments>
</comment>
<comment type="interaction">
    <interactant intactId="EBI-10176379">
        <id>P59991</id>
    </interactant>
    <interactant intactId="EBI-11524542">
        <id>O76083-2</id>
        <label>PDE9A</label>
    </interactant>
    <organismsDiffer>false</organismsDiffer>
    <experiments>3</experiments>
</comment>
<comment type="interaction">
    <interactant intactId="EBI-10176379">
        <id>P59991</id>
    </interactant>
    <interactant intactId="EBI-1043580">
        <id>Q9BRX2</id>
        <label>PELO</label>
    </interactant>
    <organismsDiffer>false</organismsDiffer>
    <experiments>3</experiments>
</comment>
<comment type="interaction">
    <interactant intactId="EBI-10176379">
        <id>P59991</id>
    </interactant>
    <interactant intactId="EBI-14084211">
        <id>A2BDE7</id>
        <label>PHLDA1</label>
    </interactant>
    <organismsDiffer>false</organismsDiffer>
    <experiments>3</experiments>
</comment>
<comment type="interaction">
    <interactant intactId="EBI-10176379">
        <id>P59991</id>
    </interactant>
    <interactant intactId="EBI-10232538">
        <id>Q8WWB5</id>
        <label>PIH1D2</label>
    </interactant>
    <organismsDiffer>false</organismsDiffer>
    <experiments>3</experiments>
</comment>
<comment type="interaction">
    <interactant intactId="EBI-10176379">
        <id>P59991</id>
    </interactant>
    <interactant intactId="EBI-1055079">
        <id>O15160</id>
        <label>POLR1C</label>
    </interactant>
    <organismsDiffer>false</organismsDiffer>
    <experiments>3</experiments>
</comment>
<comment type="interaction">
    <interactant intactId="EBI-10176379">
        <id>P59991</id>
    </interactant>
    <interactant intactId="EBI-17236143">
        <id>Q12837</id>
        <label>POU4F2</label>
    </interactant>
    <organismsDiffer>false</organismsDiffer>
    <experiments>3</experiments>
</comment>
<comment type="interaction">
    <interactant intactId="EBI-10176379">
        <id>P59991</id>
    </interactant>
    <interactant intactId="EBI-746453">
        <id>P54725</id>
        <label>RAD23A</label>
    </interactant>
    <organismsDiffer>false</organismsDiffer>
    <experiments>3</experiments>
</comment>
<comment type="interaction">
    <interactant intactId="EBI-10176379">
        <id>P59991</id>
    </interactant>
    <interactant intactId="EBI-395290">
        <id>Q14498</id>
        <label>RBM39</label>
    </interactant>
    <organismsDiffer>false</organismsDiffer>
    <experiments>3</experiments>
</comment>
<comment type="interaction">
    <interactant intactId="EBI-10176379">
        <id>P59991</id>
    </interactant>
    <interactant intactId="EBI-740322">
        <id>Q93062</id>
        <label>RBPMS</label>
    </interactant>
    <organismsDiffer>false</organismsDiffer>
    <experiments>3</experiments>
</comment>
<comment type="interaction">
    <interactant intactId="EBI-10176379">
        <id>P59991</id>
    </interactant>
    <interactant intactId="EBI-398523">
        <id>P62877</id>
        <label>RBX1</label>
    </interactant>
    <organismsDiffer>false</organismsDiffer>
    <experiments>3</experiments>
</comment>
<comment type="interaction">
    <interactant intactId="EBI-10176379">
        <id>P59991</id>
    </interactant>
    <interactant intactId="EBI-372094">
        <id>Q9BQY4</id>
        <label>RHOXF2</label>
    </interactant>
    <organismsDiffer>false</organismsDiffer>
    <experiments>3</experiments>
</comment>
<comment type="interaction">
    <interactant intactId="EBI-10176379">
        <id>P59991</id>
    </interactant>
    <interactant intactId="EBI-11017428">
        <id>Q13214-2</id>
        <label>SEMA3B</label>
    </interactant>
    <organismsDiffer>false</organismsDiffer>
    <experiments>3</experiments>
</comment>
<comment type="interaction">
    <interactant intactId="EBI-10176379">
        <id>P59991</id>
    </interactant>
    <interactant intactId="EBI-7244836">
        <id>Q9UP95</id>
        <label>SLC12A4</label>
    </interactant>
    <organismsDiffer>false</organismsDiffer>
    <experiments>3</experiments>
</comment>
<comment type="interaction">
    <interactant intactId="EBI-10176379">
        <id>P59991</id>
    </interactant>
    <interactant intactId="EBI-12002412">
        <id>Q86YT5</id>
        <label>SLC13A5</label>
    </interactant>
    <organismsDiffer>false</organismsDiffer>
    <experiments>3</experiments>
</comment>
<comment type="interaction">
    <interactant intactId="EBI-10176379">
        <id>P59991</id>
    </interactant>
    <interactant intactId="EBI-12806032">
        <id>Q16348</id>
        <label>SLC15A2</label>
    </interactant>
    <organismsDiffer>false</organismsDiffer>
    <experiments>3</experiments>
</comment>
<comment type="interaction">
    <interactant intactId="EBI-10176379">
        <id>P59991</id>
    </interactant>
    <interactant intactId="EBI-12179023">
        <id>Q8IY34</id>
        <label>SLC15A3</label>
    </interactant>
    <organismsDiffer>false</organismsDiffer>
    <experiments>4</experiments>
</comment>
<comment type="interaction">
    <interactant intactId="EBI-10176379">
        <id>P59991</id>
    </interactant>
    <interactant intactId="EBI-743976">
        <id>Q96LM6</id>
        <label>SPMIP9</label>
    </interactant>
    <organismsDiffer>false</organismsDiffer>
    <experiments>3</experiments>
</comment>
<comment type="interaction">
    <interactant intactId="EBI-10176379">
        <id>P59991</id>
    </interactant>
    <interactant intactId="EBI-7082156">
        <id>Q7Z698</id>
        <label>SPRED2</label>
    </interactant>
    <organismsDiffer>false</organismsDiffer>
    <experiments>3</experiments>
</comment>
<comment type="interaction">
    <interactant intactId="EBI-10176379">
        <id>P59991</id>
    </interactant>
    <interactant intactId="EBI-3866665">
        <id>O43609</id>
        <label>SPRY1</label>
    </interactant>
    <organismsDiffer>false</organismsDiffer>
    <experiments>3</experiments>
</comment>
<comment type="interaction">
    <interactant intactId="EBI-10176379">
        <id>P59991</id>
    </interactant>
    <interactant intactId="EBI-10976394">
        <id>Q9BRL6-2</id>
        <label>SRSF8</label>
    </interactant>
    <organismsDiffer>false</organismsDiffer>
    <experiments>3</experiments>
</comment>
<comment type="interaction">
    <interactant intactId="EBI-10176379">
        <id>P59991</id>
    </interactant>
    <interactant intactId="EBI-710310">
        <id>Q15560</id>
        <label>TCEA2</label>
    </interactant>
    <organismsDiffer>false</organismsDiffer>
    <experiments>3</experiments>
</comment>
<comment type="interaction">
    <interactant intactId="EBI-10176379">
        <id>P59991</id>
    </interactant>
    <interactant intactId="EBI-715869">
        <id>Q9GZM7</id>
        <label>TINAGL1</label>
    </interactant>
    <organismsDiffer>false</organismsDiffer>
    <experiments>3</experiments>
</comment>
<comment type="interaction">
    <interactant intactId="EBI-10176379">
        <id>P59991</id>
    </interactant>
    <interactant intactId="EBI-10303636">
        <id>Q9GZM7-3</id>
        <label>TINAGL1</label>
    </interactant>
    <organismsDiffer>false</organismsDiffer>
    <experiments>3</experiments>
</comment>
<comment type="interaction">
    <interactant intactId="EBI-10176379">
        <id>P59991</id>
    </interactant>
    <interactant intactId="EBI-11741437">
        <id>Q08117-2</id>
        <label>TLE5</label>
    </interactant>
    <organismsDiffer>false</organismsDiffer>
    <experiments>3</experiments>
</comment>
<comment type="interaction">
    <interactant intactId="EBI-10176379">
        <id>P59991</id>
    </interactant>
    <interactant intactId="EBI-11724423">
        <id>Q7Z7N9</id>
        <label>TMEM179B</label>
    </interactant>
    <organismsDiffer>false</organismsDiffer>
    <experiments>3</experiments>
</comment>
<comment type="interaction">
    <interactant intactId="EBI-10176379">
        <id>P59991</id>
    </interactant>
    <interactant intactId="EBI-949753">
        <id>Q63HR2</id>
        <label>TNS2</label>
    </interactant>
    <organismsDiffer>false</organismsDiffer>
    <experiments>6</experiments>
</comment>
<comment type="interaction">
    <interactant intactId="EBI-10176379">
        <id>P59991</id>
    </interactant>
    <interactant intactId="EBI-5235829">
        <id>Q8IWZ5</id>
        <label>TRIM42</label>
    </interactant>
    <organismsDiffer>false</organismsDiffer>
    <experiments>3</experiments>
</comment>
<comment type="interaction">
    <interactant intactId="EBI-10176379">
        <id>P59991</id>
    </interactant>
    <interactant intactId="EBI-358993">
        <id>Q15645</id>
        <label>TRIP13</label>
    </interactant>
    <organismsDiffer>false</organismsDiffer>
    <experiments>3</experiments>
</comment>
<comment type="interaction">
    <interactant intactId="EBI-10176379">
        <id>P59991</id>
    </interactant>
    <interactant intactId="EBI-10241197">
        <id>Q3SY00</id>
        <label>TSGA10IP</label>
    </interactant>
    <organismsDiffer>false</organismsDiffer>
    <experiments>3</experiments>
</comment>
<comment type="interaction">
    <interactant intactId="EBI-10176379">
        <id>P59991</id>
    </interactant>
    <interactant intactId="EBI-10210710">
        <id>P49638</id>
        <label>TTPA</label>
    </interactant>
    <organismsDiffer>false</organismsDiffer>
    <experiments>3</experiments>
</comment>
<comment type="interaction">
    <interactant intactId="EBI-10176379">
        <id>P59991</id>
    </interactant>
    <interactant intactId="EBI-10249550">
        <id>Q6EMK4</id>
        <label>VASN</label>
    </interactant>
    <organismsDiffer>false</organismsDiffer>
    <experiments>3</experiments>
</comment>
<comment type="interaction">
    <interactant intactId="EBI-10176379">
        <id>P59991</id>
    </interactant>
    <interactant intactId="EBI-10191303">
        <id>O95231</id>
        <label>VENTX</label>
    </interactant>
    <organismsDiffer>false</organismsDiffer>
    <experiments>6</experiments>
</comment>
<comment type="interaction">
    <interactant intactId="EBI-10176379">
        <id>P59991</id>
    </interactant>
    <interactant intactId="EBI-11957216">
        <id>A8MV65-2</id>
        <label>VGLL3</label>
    </interactant>
    <organismsDiffer>false</organismsDiffer>
    <experiments>3</experiments>
</comment>
<comment type="interaction">
    <interactant intactId="EBI-10176379">
        <id>P59991</id>
    </interactant>
    <interactant intactId="EBI-743787">
        <id>Q9GZM5</id>
        <label>YIPF3</label>
    </interactant>
    <organismsDiffer>false</organismsDiffer>
    <experiments>3</experiments>
</comment>
<comment type="interaction">
    <interactant intactId="EBI-10176379">
        <id>P59991</id>
    </interactant>
    <interactant intactId="EBI-765538">
        <id>P25490</id>
        <label>YY1</label>
    </interactant>
    <organismsDiffer>false</organismsDiffer>
    <experiments>3</experiments>
</comment>
<comment type="interaction">
    <interactant intactId="EBI-10176379">
        <id>P59991</id>
    </interactant>
    <interactant intactId="EBI-395708">
        <id>Q96C00</id>
        <label>ZBTB9</label>
    </interactant>
    <organismsDiffer>false</organismsDiffer>
    <experiments>6</experiments>
</comment>
<comment type="interaction">
    <interactant intactId="EBI-10176379">
        <id>P59991</id>
    </interactant>
    <interactant intactId="EBI-2818796">
        <id>Q8WTX9</id>
        <label>ZDHHC1</label>
    </interactant>
    <organismsDiffer>false</organismsDiffer>
    <experiments>3</experiments>
</comment>
<comment type="interaction">
    <interactant intactId="EBI-10176379">
        <id>P59991</id>
    </interactant>
    <interactant intactId="EBI-11962760">
        <id>Q9NZV7</id>
        <label>ZIM2</label>
    </interactant>
    <organismsDiffer>false</organismsDiffer>
    <experiments>3</experiments>
</comment>
<comment type="interaction">
    <interactant intactId="EBI-10176379">
        <id>P59991</id>
    </interactant>
    <interactant intactId="EBI-2849363">
        <id>Q8IYN0</id>
        <label>ZNF100</label>
    </interactant>
    <organismsDiffer>false</organismsDiffer>
    <experiments>3</experiments>
</comment>
<comment type="interaction">
    <interactant intactId="EBI-10176379">
        <id>P59991</id>
    </interactant>
    <interactant intactId="EBI-347633">
        <id>Q9H9D4</id>
        <label>ZNF408</label>
    </interactant>
    <organismsDiffer>false</organismsDiffer>
    <experiments>3</experiments>
</comment>
<comment type="interaction">
    <interactant intactId="EBI-10176379">
        <id>P59991</id>
    </interactant>
    <interactant intactId="EBI-10486136">
        <id>Q6ZNH5</id>
        <label>ZNF497</label>
    </interactant>
    <organismsDiffer>false</organismsDiffer>
    <experiments>3</experiments>
</comment>
<comment type="interaction">
    <interactant intactId="EBI-10176379">
        <id>P59991</id>
    </interactant>
    <interactant intactId="EBI-745520">
        <id>Q9P0T4</id>
        <label>ZNF581</label>
    </interactant>
    <organismsDiffer>false</organismsDiffer>
    <experiments>3</experiments>
</comment>
<comment type="interaction">
    <interactant intactId="EBI-10176379">
        <id>P59991</id>
    </interactant>
    <interactant intactId="EBI-6427977">
        <id>Q96SQ5</id>
        <label>ZNF587</label>
    </interactant>
    <organismsDiffer>false</organismsDiffer>
    <experiments>3</experiments>
</comment>
<comment type="interaction">
    <interactant intactId="EBI-10176379">
        <id>P59991</id>
    </interactant>
    <interactant intactId="EBI-9116427">
        <id>Q9P2J8</id>
        <label>ZNF624</label>
    </interactant>
    <organismsDiffer>false</organismsDiffer>
    <experiments>3</experiments>
</comment>
<comment type="interaction">
    <interactant intactId="EBI-10176379">
        <id>P59991</id>
    </interactant>
    <interactant intactId="EBI-16429014">
        <id>A0A0S2Z5X4</id>
        <label>ZNF688</label>
    </interactant>
    <organismsDiffer>false</organismsDiffer>
    <experiments>3</experiments>
</comment>
<comment type="interaction">
    <interactant intactId="EBI-10176379">
        <id>P59991</id>
    </interactant>
    <interactant intactId="EBI-11090299">
        <id>Q9H7X3</id>
        <label>ZNF696</label>
    </interactant>
    <organismsDiffer>false</organismsDiffer>
    <experiments>3</experiments>
</comment>
<comment type="interaction">
    <interactant intactId="EBI-10176379">
        <id>P59991</id>
    </interactant>
    <interactant intactId="EBI-745775">
        <id>Q96H86</id>
        <label>ZNF764</label>
    </interactant>
    <organismsDiffer>false</organismsDiffer>
    <experiments>3</experiments>
</comment>
<comment type="interaction">
    <interactant intactId="EBI-10176379">
        <id>P59991</id>
    </interactant>
    <interactant intactId="EBI-3925400">
        <id>A8K8V0</id>
        <label>ZNF785</label>
    </interactant>
    <organismsDiffer>false</organismsDiffer>
    <experiments>3</experiments>
</comment>
<comment type="interaction">
    <interactant intactId="EBI-10176379">
        <id>P59991</id>
    </interactant>
    <interactant intactId="EBI-347522">
        <id>O43257</id>
        <label>ZNHIT1</label>
    </interactant>
    <organismsDiffer>false</organismsDiffer>
    <experiments>3</experiments>
</comment>
<comment type="interaction">
    <interactant intactId="EBI-10176379">
        <id>P59991</id>
    </interactant>
    <interactant intactId="EBI-10243533">
        <id>Q5BKY6</id>
    </interactant>
    <organismsDiffer>false</organismsDiffer>
    <experiments>3</experiments>
</comment>
<comment type="interaction">
    <interactant intactId="EBI-10176379">
        <id>P59991</id>
    </interactant>
    <interactant intactId="EBI-750454">
        <id>Q96EJ4</id>
    </interactant>
    <organismsDiffer>false</organismsDiffer>
    <experiments>3</experiments>
</comment>
<comment type="tissue specificity">
    <text evidence="1 2">Restricted to a narrow region of the hair fiber cuticle, lying approximately 20 cell layers above the apex of the dermal papilla of the hair root; not detected in any other tissues.</text>
</comment>
<comment type="similarity">
    <text evidence="3">Belongs to the KRTAP type 12 family.</text>
</comment>
<gene>
    <name type="primary">KRTAP12-2</name>
    <name type="synonym">KAP12.2</name>
    <name type="synonym">KRTAP12.2</name>
</gene>
<proteinExistence type="evidence at protein level"/>
<accession>P59991</accession>
<accession>A6NIS1</accession>
<accession>A6NMS9</accession>
<accession>Q0VAS4</accession>
<dbReference type="EMBL" id="AB076362">
    <property type="protein sequence ID" value="BAD01549.1"/>
    <property type="molecule type" value="mRNA"/>
</dbReference>
<dbReference type="EMBL" id="AJ566389">
    <property type="protein sequence ID" value="CAD97469.1"/>
    <property type="molecule type" value="mRNA"/>
</dbReference>
<dbReference type="EMBL" id="AL773602">
    <property type="status" value="NOT_ANNOTATED_CDS"/>
    <property type="molecule type" value="Genomic_DNA"/>
</dbReference>
<dbReference type="EMBL" id="BC120941">
    <property type="protein sequence ID" value="AAI20942.1"/>
    <property type="molecule type" value="mRNA"/>
</dbReference>
<dbReference type="CCDS" id="CCDS42965.1"/>
<dbReference type="RefSeq" id="NP_859012.1">
    <property type="nucleotide sequence ID" value="NM_181684.3"/>
</dbReference>
<dbReference type="BioGRID" id="131684">
    <property type="interactions" value="128"/>
</dbReference>
<dbReference type="FunCoup" id="P59991">
    <property type="interactions" value="57"/>
</dbReference>
<dbReference type="IntAct" id="P59991">
    <property type="interactions" value="119"/>
</dbReference>
<dbReference type="STRING" id="9606.ENSP00000354001"/>
<dbReference type="BioMuta" id="KRTAP12-2"/>
<dbReference type="DMDM" id="38257914"/>
<dbReference type="MassIVE" id="P59991"/>
<dbReference type="PaxDb" id="9606-ENSP00000354001"/>
<dbReference type="PeptideAtlas" id="P59991"/>
<dbReference type="DNASU" id="353323"/>
<dbReference type="Ensembl" id="ENST00000360770.3">
    <property type="protein sequence ID" value="ENSP00000354001.3"/>
    <property type="gene ID" value="ENSG00000221864.4"/>
</dbReference>
<dbReference type="GeneID" id="353323"/>
<dbReference type="KEGG" id="hsa:353323"/>
<dbReference type="MANE-Select" id="ENST00000360770.3">
    <property type="protein sequence ID" value="ENSP00000354001.3"/>
    <property type="RefSeq nucleotide sequence ID" value="NM_181684.3"/>
    <property type="RefSeq protein sequence ID" value="NP_859012.1"/>
</dbReference>
<dbReference type="UCSC" id="uc002zfu.3">
    <property type="organism name" value="human"/>
</dbReference>
<dbReference type="AGR" id="HGNC:20530"/>
<dbReference type="CTD" id="353323"/>
<dbReference type="GeneCards" id="KRTAP12-2"/>
<dbReference type="HGNC" id="HGNC:20530">
    <property type="gene designation" value="KRTAP12-2"/>
</dbReference>
<dbReference type="HPA" id="ENSG00000221864">
    <property type="expression patterns" value="Tissue enriched (skin)"/>
</dbReference>
<dbReference type="neXtProt" id="NX_P59991"/>
<dbReference type="OpenTargets" id="ENSG00000221864"/>
<dbReference type="PharmGKB" id="PA134993440"/>
<dbReference type="VEuPathDB" id="HostDB:ENSG00000221864"/>
<dbReference type="eggNOG" id="KOG4726">
    <property type="taxonomic scope" value="Eukaryota"/>
</dbReference>
<dbReference type="GeneTree" id="ENSGT00940000163527"/>
<dbReference type="HOGENOM" id="CLU_138013_0_0_1"/>
<dbReference type="InParanoid" id="P59991"/>
<dbReference type="OMA" id="PCVPAPC"/>
<dbReference type="OrthoDB" id="9482936at2759"/>
<dbReference type="PAN-GO" id="P59991">
    <property type="GO annotations" value="0 GO annotations based on evolutionary models"/>
</dbReference>
<dbReference type="PhylomeDB" id="P59991"/>
<dbReference type="TreeFam" id="TF339135"/>
<dbReference type="PathwayCommons" id="P59991"/>
<dbReference type="Reactome" id="R-HSA-6805567">
    <property type="pathway name" value="Keratinization"/>
</dbReference>
<dbReference type="SignaLink" id="P59991"/>
<dbReference type="BioGRID-ORCS" id="353323">
    <property type="hits" value="10 hits in 1128 CRISPR screens"/>
</dbReference>
<dbReference type="GenomeRNAi" id="353323"/>
<dbReference type="Pharos" id="P59991">
    <property type="development level" value="Tdark"/>
</dbReference>
<dbReference type="PRO" id="PR:P59991"/>
<dbReference type="Proteomes" id="UP000005640">
    <property type="component" value="Chromosome 21"/>
</dbReference>
<dbReference type="RNAct" id="P59991">
    <property type="molecule type" value="protein"/>
</dbReference>
<dbReference type="Bgee" id="ENSG00000221864">
    <property type="expression patterns" value="Expressed in male germ line stem cell (sensu Vertebrata) in testis and 16 other cell types or tissues"/>
</dbReference>
<dbReference type="GO" id="GO:0005829">
    <property type="term" value="C:cytosol"/>
    <property type="evidence" value="ECO:0000304"/>
    <property type="project" value="Reactome"/>
</dbReference>
<dbReference type="GO" id="GO:0005882">
    <property type="term" value="C:intermediate filament"/>
    <property type="evidence" value="ECO:0007669"/>
    <property type="project" value="UniProtKB-KW"/>
</dbReference>
<dbReference type="InterPro" id="IPR007951">
    <property type="entry name" value="KRTAP_PMG"/>
</dbReference>
<dbReference type="PANTHER" id="PTHR23262">
    <property type="entry name" value="KERATIN ASSOCIATED PROTEIN"/>
    <property type="match status" value="1"/>
</dbReference>
<dbReference type="PANTHER" id="PTHR23262:SF180">
    <property type="entry name" value="KERATIN-ASSOCIATED PROTEIN 12-1-RELATED"/>
    <property type="match status" value="1"/>
</dbReference>
<dbReference type="Pfam" id="PF05287">
    <property type="entry name" value="PMG"/>
    <property type="match status" value="1"/>
</dbReference>
<organism>
    <name type="scientific">Homo sapiens</name>
    <name type="common">Human</name>
    <dbReference type="NCBI Taxonomy" id="9606"/>
    <lineage>
        <taxon>Eukaryota</taxon>
        <taxon>Metazoa</taxon>
        <taxon>Chordata</taxon>
        <taxon>Craniata</taxon>
        <taxon>Vertebrata</taxon>
        <taxon>Euteleostomi</taxon>
        <taxon>Mammalia</taxon>
        <taxon>Eutheria</taxon>
        <taxon>Euarchontoglires</taxon>
        <taxon>Primates</taxon>
        <taxon>Haplorrhini</taxon>
        <taxon>Catarrhini</taxon>
        <taxon>Hominidae</taxon>
        <taxon>Homo</taxon>
    </lineage>
</organism>
<reference key="1">
    <citation type="journal article" date="2004" name="Genomics">
        <title>A cluster of 21 keratin-associated protein genes within introns of another gene on human chromosome 21q22.3.</title>
        <authorList>
            <person name="Shibuya K."/>
            <person name="Obayashi I."/>
            <person name="Asakawa S."/>
            <person name="Minoshima S."/>
            <person name="Kudoh J."/>
            <person name="Shimizu N."/>
        </authorList>
    </citation>
    <scope>NUCLEOTIDE SEQUENCE [MRNA]</scope>
    <scope>TISSUE SPECIFICITY</scope>
    <source>
        <tissue>Hair root</tissue>
    </source>
</reference>
<reference key="2">
    <citation type="journal article" date="2004" name="J. Invest. Dermatol.">
        <title>Hair keratin associated proteins: characterization of a second high sulfur KAP gene domain on human chromosome 21.</title>
        <authorList>
            <person name="Rogers M.A."/>
            <person name="Langbein L."/>
            <person name="Winter H."/>
            <person name="Beckmann I."/>
            <person name="Praetzel S."/>
            <person name="Schweizer J."/>
        </authorList>
    </citation>
    <scope>NUCLEOTIDE SEQUENCE [MRNA]</scope>
    <scope>TISSUE SPECIFICITY</scope>
    <source>
        <tissue>Scalp</tissue>
    </source>
</reference>
<reference key="3">
    <citation type="journal article" date="2000" name="Nature">
        <title>The DNA sequence of human chromosome 21.</title>
        <authorList>
            <person name="Hattori M."/>
            <person name="Fujiyama A."/>
            <person name="Taylor T.D."/>
            <person name="Watanabe H."/>
            <person name="Yada T."/>
            <person name="Park H.-S."/>
            <person name="Toyoda A."/>
            <person name="Ishii K."/>
            <person name="Totoki Y."/>
            <person name="Choi D.-K."/>
            <person name="Groner Y."/>
            <person name="Soeda E."/>
            <person name="Ohki M."/>
            <person name="Takagi T."/>
            <person name="Sakaki Y."/>
            <person name="Taudien S."/>
            <person name="Blechschmidt K."/>
            <person name="Polley A."/>
            <person name="Menzel U."/>
            <person name="Delabar J."/>
            <person name="Kumpf K."/>
            <person name="Lehmann R."/>
            <person name="Patterson D."/>
            <person name="Reichwald K."/>
            <person name="Rump A."/>
            <person name="Schillhabel M."/>
            <person name="Schudy A."/>
            <person name="Zimmermann W."/>
            <person name="Rosenthal A."/>
            <person name="Kudoh J."/>
            <person name="Shibuya K."/>
            <person name="Kawasaki K."/>
            <person name="Asakawa S."/>
            <person name="Shintani A."/>
            <person name="Sasaki T."/>
            <person name="Nagamine K."/>
            <person name="Mitsuyama S."/>
            <person name="Antonarakis S.E."/>
            <person name="Minoshima S."/>
            <person name="Shimizu N."/>
            <person name="Nordsiek G."/>
            <person name="Hornischer K."/>
            <person name="Brandt P."/>
            <person name="Scharfe M."/>
            <person name="Schoen O."/>
            <person name="Desario A."/>
            <person name="Reichelt J."/>
            <person name="Kauer G."/>
            <person name="Bloecker H."/>
            <person name="Ramser J."/>
            <person name="Beck A."/>
            <person name="Klages S."/>
            <person name="Hennig S."/>
            <person name="Riesselmann L."/>
            <person name="Dagand E."/>
            <person name="Wehrmeyer S."/>
            <person name="Borzym K."/>
            <person name="Gardiner K."/>
            <person name="Nizetic D."/>
            <person name="Francis F."/>
            <person name="Lehrach H."/>
            <person name="Reinhardt R."/>
            <person name="Yaspo M.-L."/>
        </authorList>
    </citation>
    <scope>NUCLEOTIDE SEQUENCE [LARGE SCALE GENOMIC DNA]</scope>
</reference>
<reference key="4">
    <citation type="journal article" date="2004" name="Genome Res.">
        <title>The status, quality, and expansion of the NIH full-length cDNA project: the Mammalian Gene Collection (MGC).</title>
        <authorList>
            <consortium name="The MGC Project Team"/>
        </authorList>
    </citation>
    <scope>NUCLEOTIDE SEQUENCE [LARGE SCALE MRNA]</scope>
</reference>
<name>KR122_HUMAN</name>
<feature type="chain" id="PRO_0000185197" description="Keratin-associated protein 12-2">
    <location>
        <begin position="1"/>
        <end position="146"/>
    </location>
</feature>
<feature type="repeat" description="1">
    <location>
        <begin position="10"/>
        <end position="14"/>
    </location>
</feature>
<feature type="repeat" description="2">
    <location>
        <begin position="15"/>
        <end position="19"/>
    </location>
</feature>
<feature type="repeat" description="3">
    <location>
        <begin position="20"/>
        <end position="24"/>
    </location>
</feature>
<feature type="repeat" description="4">
    <location>
        <begin position="25"/>
        <end position="29"/>
    </location>
</feature>
<feature type="repeat" description="5">
    <location>
        <begin position="34"/>
        <end position="38"/>
    </location>
</feature>
<feature type="repeat" description="6">
    <location>
        <begin position="40"/>
        <end position="44"/>
    </location>
</feature>
<feature type="repeat" description="7">
    <location>
        <begin position="45"/>
        <end position="49"/>
    </location>
</feature>
<feature type="repeat" description="8">
    <location>
        <begin position="55"/>
        <end position="59"/>
    </location>
</feature>
<feature type="repeat" description="9">
    <location>
        <begin position="60"/>
        <end position="64"/>
    </location>
</feature>
<feature type="repeat" description="10">
    <location>
        <begin position="65"/>
        <end position="69"/>
    </location>
</feature>
<feature type="repeat" description="11">
    <location>
        <begin position="70"/>
        <end position="74"/>
    </location>
</feature>
<feature type="repeat" description="12">
    <location>
        <begin position="75"/>
        <end position="79"/>
    </location>
</feature>
<feature type="repeat" description="13">
    <location>
        <begin position="80"/>
        <end position="84"/>
    </location>
</feature>
<feature type="repeat" description="14">
    <location>
        <begin position="85"/>
        <end position="89"/>
    </location>
</feature>
<feature type="repeat" description="15">
    <location>
        <begin position="90"/>
        <end position="94"/>
    </location>
</feature>
<feature type="repeat" description="16">
    <location>
        <begin position="95"/>
        <end position="99"/>
    </location>
</feature>
<feature type="repeat" description="17">
    <location>
        <begin position="100"/>
        <end position="104"/>
    </location>
</feature>
<feature type="repeat" description="18">
    <location>
        <begin position="105"/>
        <end position="109"/>
    </location>
</feature>
<feature type="repeat" description="19">
    <location>
        <begin position="110"/>
        <end position="114"/>
    </location>
</feature>
<feature type="repeat" description="20">
    <location>
        <begin position="120"/>
        <end position="124"/>
    </location>
</feature>
<feature type="repeat" description="21">
    <location>
        <begin position="125"/>
        <end position="129"/>
    </location>
</feature>
<feature type="repeat" description="22">
    <location>
        <begin position="130"/>
        <end position="134"/>
    </location>
</feature>
<feature type="repeat" description="23">
    <location>
        <begin position="135"/>
        <end position="139"/>
    </location>
</feature>
<feature type="region of interest" description="23 X 5 AA approximate repeats">
    <location>
        <begin position="10"/>
        <end position="139"/>
    </location>
</feature>
<feature type="sequence variant" id="VAR_060057" description="In dbSNP:rs13046903.">
    <original>A</original>
    <variation>T</variation>
    <location>
        <position position="16"/>
    </location>
</feature>
<feature type="sequence variant" id="VAR_060058" description="In dbSNP:rs7275298.">
    <original>A</original>
    <variation>V</variation>
    <location>
        <position position="16"/>
    </location>
</feature>
<feature type="sequence variant" id="VAR_060059" description="In dbSNP:rs7275281.">
    <original>S</original>
    <variation>C</variation>
    <location>
        <position position="29"/>
    </location>
</feature>
<feature type="sequence variant" id="VAR_062115" description="In dbSNP:rs7276859.">
    <original>S</original>
    <variation>P</variation>
    <location>
        <position position="29"/>
    </location>
</feature>
<feature type="sequence variant" id="VAR_053468" description="In dbSNP:rs12483730.">
    <original>A</original>
    <variation>V</variation>
    <location>
        <position position="116"/>
    </location>
</feature>
<feature type="sequence variant" id="VAR_053469" description="In dbSNP:rs2838622.">
    <original>S</original>
    <variation>P</variation>
    <location>
        <position position="143"/>
    </location>
</feature>
<sequence>MCHTSCSSGCQPACCAPSPCQPACCVPSSCQASCCVPVGCQSSVCVPVSFKPAVCLPVSCQSSVCVPMSFKSAVCVPVSCQSSVCVPVSCRPIVCAAPSCQSSLCVPVSCRPVVYAAPSCQSSGCCQPSCTSVLCRPISYSISSCC</sequence>
<evidence type="ECO:0000269" key="1">
    <source>
    </source>
</evidence>
<evidence type="ECO:0000269" key="2">
    <source>
    </source>
</evidence>
<evidence type="ECO:0000305" key="3"/>
<protein>
    <recommendedName>
        <fullName>Keratin-associated protein 12-2</fullName>
    </recommendedName>
    <alternativeName>
        <fullName>High sulfur keratin-associated protein 12.2</fullName>
    </alternativeName>
    <alternativeName>
        <fullName>Keratin-associated protein 12.2</fullName>
    </alternativeName>
</protein>
<keyword id="KW-0416">Keratin</keyword>
<keyword id="KW-1267">Proteomics identification</keyword>
<keyword id="KW-1185">Reference proteome</keyword>
<keyword id="KW-0677">Repeat</keyword>